<proteinExistence type="evidence at protein level"/>
<accession>Q56217</accession>
<accession>Q5SM59</accession>
<feature type="chain" id="PRO_0000117861" description="NADH-quinone oxidoreductase subunit 7">
    <location>
        <begin position="1"/>
        <end position="119"/>
    </location>
</feature>
<feature type="transmembrane region" description="Helical" evidence="1">
    <location>
        <begin position="11"/>
        <end position="31"/>
    </location>
</feature>
<feature type="transmembrane region" description="Helical" evidence="1">
    <location>
        <begin position="59"/>
        <end position="79"/>
    </location>
</feature>
<feature type="transmembrane region" description="Helical" evidence="1">
    <location>
        <begin position="88"/>
        <end position="108"/>
    </location>
</feature>
<feature type="helix" evidence="4">
    <location>
        <begin position="4"/>
        <end position="30"/>
    </location>
</feature>
<feature type="helix" evidence="4">
    <location>
        <begin position="38"/>
        <end position="41"/>
    </location>
</feature>
<feature type="strand" evidence="3">
    <location>
        <begin position="44"/>
        <end position="47"/>
    </location>
</feature>
<feature type="helix" evidence="4">
    <location>
        <begin position="60"/>
        <end position="83"/>
    </location>
</feature>
<feature type="turn" evidence="4">
    <location>
        <begin position="86"/>
        <end position="88"/>
    </location>
</feature>
<feature type="helix" evidence="4">
    <location>
        <begin position="89"/>
        <end position="113"/>
    </location>
</feature>
<reference key="1">
    <citation type="journal article" date="1997" name="J. Biol. Chem.">
        <title>The proton-translocating NADH-quinone oxidoreductase (NDH-1) of thermophilic bacterium Thermus thermophilus HB-8. Complete DNA sequence of the gene cluster and thermostable properties of the expressed NQO2 subunit.</title>
        <authorList>
            <person name="Yano T."/>
            <person name="Chu S.S."/>
            <person name="Sled' V.D."/>
            <person name="Ohnishi T."/>
            <person name="Yagi T."/>
        </authorList>
    </citation>
    <scope>NUCLEOTIDE SEQUENCE [GENOMIC DNA]</scope>
    <source>
        <strain>ATCC 27634 / DSM 579 / HB8</strain>
    </source>
</reference>
<reference key="2">
    <citation type="submission" date="2004-11" db="EMBL/GenBank/DDBJ databases">
        <title>Complete genome sequence of Thermus thermophilus HB8.</title>
        <authorList>
            <person name="Masui R."/>
            <person name="Kurokawa K."/>
            <person name="Nakagawa N."/>
            <person name="Tokunaga F."/>
            <person name="Koyama Y."/>
            <person name="Shibata T."/>
            <person name="Oshima T."/>
            <person name="Yokoyama S."/>
            <person name="Yasunaga T."/>
            <person name="Kuramitsu S."/>
        </authorList>
    </citation>
    <scope>NUCLEOTIDE SEQUENCE [LARGE SCALE GENOMIC DNA]</scope>
    <source>
        <strain>ATCC 27634 / DSM 579 / HB8</strain>
    </source>
</reference>
<name>NQO7_THET8</name>
<organism>
    <name type="scientific">Thermus thermophilus (strain ATCC 27634 / DSM 579 / HB8)</name>
    <dbReference type="NCBI Taxonomy" id="300852"/>
    <lineage>
        <taxon>Bacteria</taxon>
        <taxon>Thermotogati</taxon>
        <taxon>Deinococcota</taxon>
        <taxon>Deinococci</taxon>
        <taxon>Thermales</taxon>
        <taxon>Thermaceae</taxon>
        <taxon>Thermus</taxon>
    </lineage>
</organism>
<evidence type="ECO:0000255" key="1"/>
<evidence type="ECO:0000305" key="2"/>
<evidence type="ECO:0007829" key="3">
    <source>
        <dbReference type="PDB" id="4HEA"/>
    </source>
</evidence>
<evidence type="ECO:0007829" key="4">
    <source>
        <dbReference type="PDB" id="6Y11"/>
    </source>
</evidence>
<protein>
    <recommendedName>
        <fullName>NADH-quinone oxidoreductase subunit 7</fullName>
        <ecNumber>7.1.1.-</ecNumber>
    </recommendedName>
    <alternativeName>
        <fullName>NADH dehydrogenase I chain 7</fullName>
    </alternativeName>
    <alternativeName>
        <fullName>NDH-1 subunit 7</fullName>
    </alternativeName>
</protein>
<comment type="function">
    <text>NDH-1 shuttles electrons from NADH, via FMN and iron-sulfur (Fe-S) centers, to quinones in the respiratory chain. The immediate electron acceptor for the enzyme in this species is menaquinone. Couples the redox reaction to proton translocation (for every two electrons transferred, four hydrogen ions are translocated across the cytoplasmic membrane), and thus conserves the redox energy in a proton gradient required for the synthesis of ATP.</text>
</comment>
<comment type="catalytic activity">
    <reaction>
        <text>a quinone + NADH + 5 H(+)(in) = a quinol + NAD(+) + 4 H(+)(out)</text>
        <dbReference type="Rhea" id="RHEA:57888"/>
        <dbReference type="ChEBI" id="CHEBI:15378"/>
        <dbReference type="ChEBI" id="CHEBI:24646"/>
        <dbReference type="ChEBI" id="CHEBI:57540"/>
        <dbReference type="ChEBI" id="CHEBI:57945"/>
        <dbReference type="ChEBI" id="CHEBI:132124"/>
    </reaction>
</comment>
<comment type="subunit">
    <text>NDH-1 is composed of 15 different subunits, Nqo1 to Nqo15. The complex has a L-shaped structure, with the hydrophobic arm (subunits Nqo7, Nqo8 and Nqo10 to Nqo14) embedded in the membrane and the hydrophilic peripheral arm (subunits Nqo1 to Nqo6, Nqo9 and Nqo15) protruding into the bacterial cytoplasm. The hydrophilic domain contains all the redox centers.</text>
</comment>
<comment type="subcellular location">
    <subcellularLocation>
        <location>Cell inner membrane</location>
        <topology>Multi-pass membrane protein</topology>
    </subcellularLocation>
</comment>
<comment type="similarity">
    <text evidence="2">Belongs to the complex I subunit 3 family.</text>
</comment>
<sequence length="119" mass="13145">MAPIQEYVGTLIYVGVALFIGVAALLVGALLGPKKPGRAKLMPYESGNDPAGEVKRFPVHFYVVAMLFILFDVEVAFLWPYAVSAGGLGLYGFLGVLAFTLLLFVGFLYEWWKGVMRWH</sequence>
<dbReference type="EC" id="7.1.1.-"/>
<dbReference type="EMBL" id="U52917">
    <property type="protein sequence ID" value="AAA97938.1"/>
    <property type="molecule type" value="Genomic_DNA"/>
</dbReference>
<dbReference type="EMBL" id="AP008226">
    <property type="protein sequence ID" value="BAD69907.1"/>
    <property type="molecule type" value="Genomic_DNA"/>
</dbReference>
<dbReference type="PIR" id="T11898">
    <property type="entry name" value="T11898"/>
</dbReference>
<dbReference type="RefSeq" id="WP_011174272.1">
    <property type="nucleotide sequence ID" value="NC_006461.1"/>
</dbReference>
<dbReference type="RefSeq" id="YP_143350.1">
    <property type="nucleotide sequence ID" value="NC_006461.1"/>
</dbReference>
<dbReference type="PDB" id="4HE8">
    <property type="method" value="X-ray"/>
    <property type="resolution" value="3.30 A"/>
    <property type="chains" value="A/B=1-119"/>
</dbReference>
<dbReference type="PDB" id="4HEA">
    <property type="method" value="X-ray"/>
    <property type="resolution" value="3.30 A"/>
    <property type="chains" value="A/P=1-119"/>
</dbReference>
<dbReference type="PDB" id="6I0D">
    <property type="method" value="X-ray"/>
    <property type="resolution" value="3.60 A"/>
    <property type="chains" value="A/P=1-119"/>
</dbReference>
<dbReference type="PDB" id="6I1P">
    <property type="method" value="X-ray"/>
    <property type="resolution" value="3.21 A"/>
    <property type="chains" value="A/P=1-119"/>
</dbReference>
<dbReference type="PDB" id="6Q8O">
    <property type="method" value="X-ray"/>
    <property type="resolution" value="3.60 A"/>
    <property type="chains" value="A/P=1-119"/>
</dbReference>
<dbReference type="PDB" id="6Q8W">
    <property type="method" value="X-ray"/>
    <property type="resolution" value="3.40 A"/>
    <property type="chains" value="A/P=1-119"/>
</dbReference>
<dbReference type="PDB" id="6Q8X">
    <property type="method" value="X-ray"/>
    <property type="resolution" value="3.51 A"/>
    <property type="chains" value="A/P=1-119"/>
</dbReference>
<dbReference type="PDB" id="6Y11">
    <property type="method" value="X-ray"/>
    <property type="resolution" value="3.11 A"/>
    <property type="chains" value="A/P=1-119"/>
</dbReference>
<dbReference type="PDB" id="6ZIY">
    <property type="method" value="EM"/>
    <property type="resolution" value="4.25 A"/>
    <property type="chains" value="A=1-119"/>
</dbReference>
<dbReference type="PDB" id="6ZJL">
    <property type="method" value="EM"/>
    <property type="resolution" value="4.30 A"/>
    <property type="chains" value="A=1-119"/>
</dbReference>
<dbReference type="PDB" id="6ZJN">
    <property type="method" value="EM"/>
    <property type="resolution" value="6.10 A"/>
    <property type="chains" value="A=1-119"/>
</dbReference>
<dbReference type="PDB" id="6ZJY">
    <property type="method" value="EM"/>
    <property type="resolution" value="5.50 A"/>
    <property type="chains" value="A=1-119"/>
</dbReference>
<dbReference type="PDBsum" id="4HE8"/>
<dbReference type="PDBsum" id="4HEA"/>
<dbReference type="PDBsum" id="6I0D"/>
<dbReference type="PDBsum" id="6I1P"/>
<dbReference type="PDBsum" id="6Q8O"/>
<dbReference type="PDBsum" id="6Q8W"/>
<dbReference type="PDBsum" id="6Q8X"/>
<dbReference type="PDBsum" id="6Y11"/>
<dbReference type="PDBsum" id="6ZIY"/>
<dbReference type="PDBsum" id="6ZJL"/>
<dbReference type="PDBsum" id="6ZJN"/>
<dbReference type="PDBsum" id="6ZJY"/>
<dbReference type="EMDB" id="EMD-11231"/>
<dbReference type="EMDB" id="EMD-11235"/>
<dbReference type="EMDB" id="EMD-11237"/>
<dbReference type="EMDB" id="EMD-11238"/>
<dbReference type="SMR" id="Q56217"/>
<dbReference type="DIP" id="DIP-59265N"/>
<dbReference type="IntAct" id="Q56217">
    <property type="interactions" value="1"/>
</dbReference>
<dbReference type="TCDB" id="3.D.1.3.1">
    <property type="family name" value="the h+ or na+-translocating nadh dehydrogenase (ndh) family"/>
</dbReference>
<dbReference type="EnsemblBacteria" id="BAD69907">
    <property type="protein sequence ID" value="BAD69907"/>
    <property type="gene ID" value="BAD69907"/>
</dbReference>
<dbReference type="GeneID" id="3168352"/>
<dbReference type="KEGG" id="ttj:TTHA0084"/>
<dbReference type="PATRIC" id="fig|300852.9.peg.82"/>
<dbReference type="eggNOG" id="COG0838">
    <property type="taxonomic scope" value="Bacteria"/>
</dbReference>
<dbReference type="HOGENOM" id="CLU_119549_0_0_0"/>
<dbReference type="PhylomeDB" id="Q56217"/>
<dbReference type="EvolutionaryTrace" id="Q56217"/>
<dbReference type="Proteomes" id="UP000000532">
    <property type="component" value="Chromosome"/>
</dbReference>
<dbReference type="GO" id="GO:0030964">
    <property type="term" value="C:NADH dehydrogenase complex"/>
    <property type="evidence" value="ECO:0007669"/>
    <property type="project" value="TreeGrafter"/>
</dbReference>
<dbReference type="GO" id="GO:0005886">
    <property type="term" value="C:plasma membrane"/>
    <property type="evidence" value="ECO:0007669"/>
    <property type="project" value="UniProtKB-SubCell"/>
</dbReference>
<dbReference type="GO" id="GO:0008137">
    <property type="term" value="F:NADH dehydrogenase (ubiquinone) activity"/>
    <property type="evidence" value="ECO:0007669"/>
    <property type="project" value="InterPro"/>
</dbReference>
<dbReference type="GO" id="GO:0050136">
    <property type="term" value="F:NADH:ubiquinone reductase (non-electrogenic) activity"/>
    <property type="evidence" value="ECO:0007669"/>
    <property type="project" value="UniProtKB-UniRule"/>
</dbReference>
<dbReference type="GO" id="GO:0048038">
    <property type="term" value="F:quinone binding"/>
    <property type="evidence" value="ECO:0007669"/>
    <property type="project" value="UniProtKB-KW"/>
</dbReference>
<dbReference type="Gene3D" id="1.20.58.1610">
    <property type="entry name" value="NADH:ubiquinone/plastoquinone oxidoreductase, chain 3"/>
    <property type="match status" value="1"/>
</dbReference>
<dbReference type="HAMAP" id="MF_01394">
    <property type="entry name" value="NDH1_NuoA"/>
    <property type="match status" value="1"/>
</dbReference>
<dbReference type="InterPro" id="IPR023043">
    <property type="entry name" value="NAD(P)H_OxRDtase_bac/plastid"/>
</dbReference>
<dbReference type="InterPro" id="IPR000440">
    <property type="entry name" value="NADH_UbQ/plastoQ_OxRdtase_su3"/>
</dbReference>
<dbReference type="InterPro" id="IPR038430">
    <property type="entry name" value="NDAH_ubi_oxred_su3_sf"/>
</dbReference>
<dbReference type="PANTHER" id="PTHR11058:SF22">
    <property type="entry name" value="NADH-QUINONE OXIDOREDUCTASE SUBUNIT A"/>
    <property type="match status" value="1"/>
</dbReference>
<dbReference type="PANTHER" id="PTHR11058">
    <property type="entry name" value="NADH-UBIQUINONE OXIDOREDUCTASE CHAIN 3"/>
    <property type="match status" value="1"/>
</dbReference>
<dbReference type="Pfam" id="PF00507">
    <property type="entry name" value="Oxidored_q4"/>
    <property type="match status" value="1"/>
</dbReference>
<gene>
    <name type="primary">nqo7</name>
    <name type="ordered locus">TTHA0084</name>
</gene>
<keyword id="KW-0002">3D-structure</keyword>
<keyword id="KW-0997">Cell inner membrane</keyword>
<keyword id="KW-1003">Cell membrane</keyword>
<keyword id="KW-0472">Membrane</keyword>
<keyword id="KW-0520">NAD</keyword>
<keyword id="KW-0874">Quinone</keyword>
<keyword id="KW-1185">Reference proteome</keyword>
<keyword id="KW-1278">Translocase</keyword>
<keyword id="KW-0812">Transmembrane</keyword>
<keyword id="KW-1133">Transmembrane helix</keyword>
<keyword id="KW-0813">Transport</keyword>